<organism>
    <name type="scientific">Schizosaccharomyces pombe (strain 972 / ATCC 24843)</name>
    <name type="common">Fission yeast</name>
    <dbReference type="NCBI Taxonomy" id="284812"/>
    <lineage>
        <taxon>Eukaryota</taxon>
        <taxon>Fungi</taxon>
        <taxon>Dikarya</taxon>
        <taxon>Ascomycota</taxon>
        <taxon>Taphrinomycotina</taxon>
        <taxon>Schizosaccharomycetes</taxon>
        <taxon>Schizosaccharomycetales</taxon>
        <taxon>Schizosaccharomycetaceae</taxon>
        <taxon>Schizosaccharomyces</taxon>
    </lineage>
</organism>
<name>YFZ1_SCHPO</name>
<dbReference type="EMBL" id="CU329670">
    <property type="protein sequence ID" value="CAB63537.1"/>
    <property type="molecule type" value="Genomic_DNA"/>
</dbReference>
<dbReference type="PIR" id="T50051">
    <property type="entry name" value="T50051"/>
</dbReference>
<dbReference type="RefSeq" id="NP_594992.1">
    <property type="nucleotide sequence ID" value="NM_001020423.2"/>
</dbReference>
<dbReference type="SMR" id="Q9US40"/>
<dbReference type="BioGRID" id="279396">
    <property type="interactions" value="2"/>
</dbReference>
<dbReference type="STRING" id="284812.Q9US40"/>
<dbReference type="iPTMnet" id="Q9US40"/>
<dbReference type="PaxDb" id="4896-SPAC1039.01.1"/>
<dbReference type="EnsemblFungi" id="SPAC1039.01.1">
    <property type="protein sequence ID" value="SPAC1039.01.1:pep"/>
    <property type="gene ID" value="SPAC1039.01"/>
</dbReference>
<dbReference type="PomBase" id="SPAC1039.01"/>
<dbReference type="VEuPathDB" id="FungiDB:SPAC1039.01"/>
<dbReference type="eggNOG" id="KOG1289">
    <property type="taxonomic scope" value="Eukaryota"/>
</dbReference>
<dbReference type="HOGENOM" id="CLU_004495_0_3_1"/>
<dbReference type="InParanoid" id="Q9US40"/>
<dbReference type="OMA" id="WAWLIAI"/>
<dbReference type="PhylomeDB" id="Q9US40"/>
<dbReference type="PRO" id="PR:Q9US40"/>
<dbReference type="Proteomes" id="UP000002485">
    <property type="component" value="Chromosome I"/>
</dbReference>
<dbReference type="GO" id="GO:0005737">
    <property type="term" value="C:cytoplasm"/>
    <property type="evidence" value="ECO:0007005"/>
    <property type="project" value="PomBase"/>
</dbReference>
<dbReference type="GO" id="GO:0016020">
    <property type="term" value="C:membrane"/>
    <property type="evidence" value="ECO:0007669"/>
    <property type="project" value="UniProtKB-SubCell"/>
</dbReference>
<dbReference type="GO" id="GO:0015171">
    <property type="term" value="F:amino acid transmembrane transporter activity"/>
    <property type="evidence" value="ECO:0000255"/>
    <property type="project" value="PomBase"/>
</dbReference>
<dbReference type="GO" id="GO:0015185">
    <property type="term" value="F:gamma-aminobutyric acid transmembrane transporter activity"/>
    <property type="evidence" value="ECO:0000318"/>
    <property type="project" value="GO_Central"/>
</dbReference>
<dbReference type="GO" id="GO:0003333">
    <property type="term" value="P:amino acid transmembrane transport"/>
    <property type="evidence" value="ECO:0000255"/>
    <property type="project" value="PomBase"/>
</dbReference>
<dbReference type="GO" id="GO:0015812">
    <property type="term" value="P:gamma-aminobutyric acid transport"/>
    <property type="evidence" value="ECO:0000318"/>
    <property type="project" value="GO_Central"/>
</dbReference>
<dbReference type="FunFam" id="1.20.1740.10:FF:000046">
    <property type="entry name" value="Amino-acid permease, putative"/>
    <property type="match status" value="1"/>
</dbReference>
<dbReference type="Gene3D" id="1.20.1740.10">
    <property type="entry name" value="Amino acid/polyamine transporter I"/>
    <property type="match status" value="1"/>
</dbReference>
<dbReference type="InterPro" id="IPR002293">
    <property type="entry name" value="AA/rel_permease1"/>
</dbReference>
<dbReference type="PANTHER" id="PTHR45649:SF52">
    <property type="entry name" value="AMINO ACID PERMEASE"/>
    <property type="match status" value="1"/>
</dbReference>
<dbReference type="PANTHER" id="PTHR45649">
    <property type="entry name" value="AMINO-ACID PERMEASE BAT1"/>
    <property type="match status" value="1"/>
</dbReference>
<dbReference type="Pfam" id="PF13520">
    <property type="entry name" value="AA_permease_2"/>
    <property type="match status" value="1"/>
</dbReference>
<dbReference type="PIRSF" id="PIRSF006060">
    <property type="entry name" value="AA_transporter"/>
    <property type="match status" value="1"/>
</dbReference>
<reference key="1">
    <citation type="journal article" date="2002" name="Nature">
        <title>The genome sequence of Schizosaccharomyces pombe.</title>
        <authorList>
            <person name="Wood V."/>
            <person name="Gwilliam R."/>
            <person name="Rajandream M.A."/>
            <person name="Lyne M.H."/>
            <person name="Lyne R."/>
            <person name="Stewart A."/>
            <person name="Sgouros J.G."/>
            <person name="Peat N."/>
            <person name="Hayles J."/>
            <person name="Baker S.G."/>
            <person name="Basham D."/>
            <person name="Bowman S."/>
            <person name="Brooks K."/>
            <person name="Brown D."/>
            <person name="Brown S."/>
            <person name="Chillingworth T."/>
            <person name="Churcher C.M."/>
            <person name="Collins M."/>
            <person name="Connor R."/>
            <person name="Cronin A."/>
            <person name="Davis P."/>
            <person name="Feltwell T."/>
            <person name="Fraser A."/>
            <person name="Gentles S."/>
            <person name="Goble A."/>
            <person name="Hamlin N."/>
            <person name="Harris D.E."/>
            <person name="Hidalgo J."/>
            <person name="Hodgson G."/>
            <person name="Holroyd S."/>
            <person name="Hornsby T."/>
            <person name="Howarth S."/>
            <person name="Huckle E.J."/>
            <person name="Hunt S."/>
            <person name="Jagels K."/>
            <person name="James K.D."/>
            <person name="Jones L."/>
            <person name="Jones M."/>
            <person name="Leather S."/>
            <person name="McDonald S."/>
            <person name="McLean J."/>
            <person name="Mooney P."/>
            <person name="Moule S."/>
            <person name="Mungall K.L."/>
            <person name="Murphy L.D."/>
            <person name="Niblett D."/>
            <person name="Odell C."/>
            <person name="Oliver K."/>
            <person name="O'Neil S."/>
            <person name="Pearson D."/>
            <person name="Quail M.A."/>
            <person name="Rabbinowitsch E."/>
            <person name="Rutherford K.M."/>
            <person name="Rutter S."/>
            <person name="Saunders D."/>
            <person name="Seeger K."/>
            <person name="Sharp S."/>
            <person name="Skelton J."/>
            <person name="Simmonds M.N."/>
            <person name="Squares R."/>
            <person name="Squares S."/>
            <person name="Stevens K."/>
            <person name="Taylor K."/>
            <person name="Taylor R.G."/>
            <person name="Tivey A."/>
            <person name="Walsh S.V."/>
            <person name="Warren T."/>
            <person name="Whitehead S."/>
            <person name="Woodward J.R."/>
            <person name="Volckaert G."/>
            <person name="Aert R."/>
            <person name="Robben J."/>
            <person name="Grymonprez B."/>
            <person name="Weltjens I."/>
            <person name="Vanstreels E."/>
            <person name="Rieger M."/>
            <person name="Schaefer M."/>
            <person name="Mueller-Auer S."/>
            <person name="Gabel C."/>
            <person name="Fuchs M."/>
            <person name="Duesterhoeft A."/>
            <person name="Fritzc C."/>
            <person name="Holzer E."/>
            <person name="Moestl D."/>
            <person name="Hilbert H."/>
            <person name="Borzym K."/>
            <person name="Langer I."/>
            <person name="Beck A."/>
            <person name="Lehrach H."/>
            <person name="Reinhardt R."/>
            <person name="Pohl T.M."/>
            <person name="Eger P."/>
            <person name="Zimmermann W."/>
            <person name="Wedler H."/>
            <person name="Wambutt R."/>
            <person name="Purnelle B."/>
            <person name="Goffeau A."/>
            <person name="Cadieu E."/>
            <person name="Dreano S."/>
            <person name="Gloux S."/>
            <person name="Lelaure V."/>
            <person name="Mottier S."/>
            <person name="Galibert F."/>
            <person name="Aves S.J."/>
            <person name="Xiang Z."/>
            <person name="Hunt C."/>
            <person name="Moore K."/>
            <person name="Hurst S.M."/>
            <person name="Lucas M."/>
            <person name="Rochet M."/>
            <person name="Gaillardin C."/>
            <person name="Tallada V.A."/>
            <person name="Garzon A."/>
            <person name="Thode G."/>
            <person name="Daga R.R."/>
            <person name="Cruzado L."/>
            <person name="Jimenez J."/>
            <person name="Sanchez M."/>
            <person name="del Rey F."/>
            <person name="Benito J."/>
            <person name="Dominguez A."/>
            <person name="Revuelta J.L."/>
            <person name="Moreno S."/>
            <person name="Armstrong J."/>
            <person name="Forsburg S.L."/>
            <person name="Cerutti L."/>
            <person name="Lowe T."/>
            <person name="McCombie W.R."/>
            <person name="Paulsen I."/>
            <person name="Potashkin J."/>
            <person name="Shpakovski G.V."/>
            <person name="Ussery D."/>
            <person name="Barrell B.G."/>
            <person name="Nurse P."/>
        </authorList>
    </citation>
    <scope>NUCLEOTIDE SEQUENCE [LARGE SCALE GENOMIC DNA]</scope>
    <source>
        <strain>972 / ATCC 24843</strain>
    </source>
</reference>
<gene>
    <name type="ORF">SPAC1039.01</name>
</gene>
<keyword id="KW-0029">Amino-acid transport</keyword>
<keyword id="KW-0472">Membrane</keyword>
<keyword id="KW-1185">Reference proteome</keyword>
<keyword id="KW-0812">Transmembrane</keyword>
<keyword id="KW-1133">Transmembrane helix</keyword>
<keyword id="KW-0813">Transport</keyword>
<protein>
    <recommendedName>
        <fullName>Uncharacterized amino-acid permease C1039.01</fullName>
    </recommendedName>
</protein>
<proteinExistence type="inferred from homology"/>
<sequence length="567" mass="61727">MSSIMEKTDVSSSKHSFTFEPSSDEVGKAAEIVDTHENFYDDQGDIDNPEELAELGYKQEFRRQLSLFGIFSISFSVLGMLPSVASTLVFGLWYVGYPGLLWAWLIAMFFLICVSMSMAEICSAMPTSGGLYYAAAVFAPKGWGPLASWITGWSNYIGNIIGQPSVNSSAASMILGAVTVNRPDFVIQRWQWFLLAVAIQCFNCVLACLPTRIISRINGVATYLNTAFLFIAGITILAYGGKNHNFVKGTKIWGDYINTTQWPTGFAILLSFNSPIWTMSGYDAPFHLSEECSNASVNAPKAIVMTAVIGGVVGWIMQIIVAYTLTDIDSVMNTSGSMWTAYLVQAMPPKAALGILSLTIISAIIMGQSALIASSRIAYSYARDGILPFSGWIGTVNPYTQTPVNAVICNCIISILILFLTFAGTVTLDAVFSVGAVAAFIAFTVPIAIRVFFTKDADFRRGPWNLGKFSRPIGLLAVSFVALMIPILCFPSVKNPTAQEMNWTCLVYGGPMLFTLVWYAISARKWFKGPKASAHYKRPGEESSDIVEGVQADIPSSSDQLKIKGDL</sequence>
<accession>Q9US40</accession>
<feature type="chain" id="PRO_0000054171" description="Uncharacterized amino-acid permease C1039.01">
    <location>
        <begin position="1"/>
        <end position="567"/>
    </location>
</feature>
<feature type="transmembrane region" description="Helical" evidence="1">
    <location>
        <begin position="65"/>
        <end position="85"/>
    </location>
</feature>
<feature type="transmembrane region" description="Helical" evidence="1">
    <location>
        <begin position="92"/>
        <end position="112"/>
    </location>
</feature>
<feature type="transmembrane region" description="Helical" evidence="1">
    <location>
        <begin position="190"/>
        <end position="210"/>
    </location>
</feature>
<feature type="transmembrane region" description="Helical" evidence="1">
    <location>
        <begin position="220"/>
        <end position="240"/>
    </location>
</feature>
<feature type="transmembrane region" description="Helical" evidence="1">
    <location>
        <begin position="302"/>
        <end position="322"/>
    </location>
</feature>
<feature type="transmembrane region" description="Helical" evidence="1">
    <location>
        <begin position="353"/>
        <end position="373"/>
    </location>
</feature>
<feature type="transmembrane region" description="Helical" evidence="1">
    <location>
        <begin position="412"/>
        <end position="432"/>
    </location>
</feature>
<feature type="transmembrane region" description="Helical" evidence="1">
    <location>
        <begin position="434"/>
        <end position="454"/>
    </location>
</feature>
<feature type="transmembrane region" description="Helical" evidence="1">
    <location>
        <begin position="473"/>
        <end position="493"/>
    </location>
</feature>
<feature type="transmembrane region" description="Helical" evidence="1">
    <location>
        <begin position="503"/>
        <end position="523"/>
    </location>
</feature>
<comment type="subcellular location">
    <subcellularLocation>
        <location evidence="2">Membrane</location>
        <topology evidence="2">Multi-pass membrane protein</topology>
    </subcellularLocation>
</comment>
<comment type="similarity">
    <text evidence="2">Belongs to the amino acid-polyamine-organocation (APC) superfamily.</text>
</comment>
<evidence type="ECO:0000255" key="1"/>
<evidence type="ECO:0000305" key="2"/>